<dbReference type="EC" id="2.8.1.13" evidence="1"/>
<dbReference type="EMBL" id="BA000022">
    <property type="protein sequence ID" value="BAA17807.1"/>
    <property type="molecule type" value="Genomic_DNA"/>
</dbReference>
<dbReference type="PIR" id="S74846">
    <property type="entry name" value="S74846"/>
</dbReference>
<dbReference type="SMR" id="P73755"/>
<dbReference type="FunCoup" id="P73755">
    <property type="interactions" value="447"/>
</dbReference>
<dbReference type="STRING" id="1148.gene:10498675"/>
<dbReference type="PaxDb" id="1148-1652889"/>
<dbReference type="EnsemblBacteria" id="BAA17807">
    <property type="protein sequence ID" value="BAA17807"/>
    <property type="gene ID" value="BAA17807"/>
</dbReference>
<dbReference type="KEGG" id="syn:sll0844"/>
<dbReference type="eggNOG" id="COG0482">
    <property type="taxonomic scope" value="Bacteria"/>
</dbReference>
<dbReference type="InParanoid" id="P73755"/>
<dbReference type="PhylomeDB" id="P73755"/>
<dbReference type="Proteomes" id="UP000001425">
    <property type="component" value="Chromosome"/>
</dbReference>
<dbReference type="GO" id="GO:0005737">
    <property type="term" value="C:cytoplasm"/>
    <property type="evidence" value="ECO:0007669"/>
    <property type="project" value="UniProtKB-SubCell"/>
</dbReference>
<dbReference type="GO" id="GO:0005524">
    <property type="term" value="F:ATP binding"/>
    <property type="evidence" value="ECO:0007669"/>
    <property type="project" value="UniProtKB-KW"/>
</dbReference>
<dbReference type="GO" id="GO:0000049">
    <property type="term" value="F:tRNA binding"/>
    <property type="evidence" value="ECO:0007669"/>
    <property type="project" value="UniProtKB-KW"/>
</dbReference>
<dbReference type="GO" id="GO:0103016">
    <property type="term" value="F:tRNA-uridine 2-sulfurtransferase activity"/>
    <property type="evidence" value="ECO:0007669"/>
    <property type="project" value="UniProtKB-EC"/>
</dbReference>
<dbReference type="GO" id="GO:0002143">
    <property type="term" value="P:tRNA wobble position uridine thiolation"/>
    <property type="evidence" value="ECO:0000318"/>
    <property type="project" value="GO_Central"/>
</dbReference>
<dbReference type="CDD" id="cd01998">
    <property type="entry name" value="MnmA_TRMU-like"/>
    <property type="match status" value="1"/>
</dbReference>
<dbReference type="FunFam" id="2.30.30.280:FF:000001">
    <property type="entry name" value="tRNA-specific 2-thiouridylase MnmA"/>
    <property type="match status" value="1"/>
</dbReference>
<dbReference type="FunFam" id="2.40.30.10:FF:000023">
    <property type="entry name" value="tRNA-specific 2-thiouridylase MnmA"/>
    <property type="match status" value="1"/>
</dbReference>
<dbReference type="FunFam" id="3.40.50.620:FF:000302">
    <property type="entry name" value="tRNA-specific 2-thiouridylase MnmA"/>
    <property type="match status" value="1"/>
</dbReference>
<dbReference type="Gene3D" id="2.30.30.280">
    <property type="entry name" value="Adenine nucleotide alpha hydrolases-like domains"/>
    <property type="match status" value="1"/>
</dbReference>
<dbReference type="Gene3D" id="3.40.50.620">
    <property type="entry name" value="HUPs"/>
    <property type="match status" value="1"/>
</dbReference>
<dbReference type="Gene3D" id="2.40.30.10">
    <property type="entry name" value="Translation factors"/>
    <property type="match status" value="1"/>
</dbReference>
<dbReference type="HAMAP" id="MF_00144">
    <property type="entry name" value="tRNA_thiouridyl_MnmA"/>
    <property type="match status" value="1"/>
</dbReference>
<dbReference type="InterPro" id="IPR004506">
    <property type="entry name" value="MnmA-like"/>
</dbReference>
<dbReference type="InterPro" id="IPR046885">
    <property type="entry name" value="MnmA-like_C"/>
</dbReference>
<dbReference type="InterPro" id="IPR046884">
    <property type="entry name" value="MnmA-like_central"/>
</dbReference>
<dbReference type="InterPro" id="IPR023382">
    <property type="entry name" value="MnmA-like_central_sf"/>
</dbReference>
<dbReference type="InterPro" id="IPR014729">
    <property type="entry name" value="Rossmann-like_a/b/a_fold"/>
</dbReference>
<dbReference type="NCBIfam" id="NF001138">
    <property type="entry name" value="PRK00143.1"/>
    <property type="match status" value="1"/>
</dbReference>
<dbReference type="NCBIfam" id="TIGR00420">
    <property type="entry name" value="trmU"/>
    <property type="match status" value="1"/>
</dbReference>
<dbReference type="PANTHER" id="PTHR11933:SF5">
    <property type="entry name" value="MITOCHONDRIAL TRNA-SPECIFIC 2-THIOURIDYLASE 1"/>
    <property type="match status" value="1"/>
</dbReference>
<dbReference type="PANTHER" id="PTHR11933">
    <property type="entry name" value="TRNA 5-METHYLAMINOMETHYL-2-THIOURIDYLATE -METHYLTRANSFERASE"/>
    <property type="match status" value="1"/>
</dbReference>
<dbReference type="Pfam" id="PF03054">
    <property type="entry name" value="tRNA_Me_trans"/>
    <property type="match status" value="1"/>
</dbReference>
<dbReference type="Pfam" id="PF20258">
    <property type="entry name" value="tRNA_Me_trans_C"/>
    <property type="match status" value="1"/>
</dbReference>
<dbReference type="Pfam" id="PF20259">
    <property type="entry name" value="tRNA_Me_trans_M"/>
    <property type="match status" value="1"/>
</dbReference>
<dbReference type="SUPFAM" id="SSF52402">
    <property type="entry name" value="Adenine nucleotide alpha hydrolases-like"/>
    <property type="match status" value="1"/>
</dbReference>
<accession>P73755</accession>
<protein>
    <recommendedName>
        <fullName evidence="1">tRNA-specific 2-thiouridylase MnmA</fullName>
        <ecNumber evidence="1">2.8.1.13</ecNumber>
    </recommendedName>
</protein>
<reference key="1">
    <citation type="journal article" date="1996" name="DNA Res.">
        <title>Sequence analysis of the genome of the unicellular cyanobacterium Synechocystis sp. strain PCC6803. II. Sequence determination of the entire genome and assignment of potential protein-coding regions.</title>
        <authorList>
            <person name="Kaneko T."/>
            <person name="Sato S."/>
            <person name="Kotani H."/>
            <person name="Tanaka A."/>
            <person name="Asamizu E."/>
            <person name="Nakamura Y."/>
            <person name="Miyajima N."/>
            <person name="Hirosawa M."/>
            <person name="Sugiura M."/>
            <person name="Sasamoto S."/>
            <person name="Kimura T."/>
            <person name="Hosouchi T."/>
            <person name="Matsuno A."/>
            <person name="Muraki A."/>
            <person name="Nakazaki N."/>
            <person name="Naruo K."/>
            <person name="Okumura S."/>
            <person name="Shimpo S."/>
            <person name="Takeuchi C."/>
            <person name="Wada T."/>
            <person name="Watanabe A."/>
            <person name="Yamada M."/>
            <person name="Yasuda M."/>
            <person name="Tabata S."/>
        </authorList>
    </citation>
    <scope>NUCLEOTIDE SEQUENCE [LARGE SCALE GENOMIC DNA]</scope>
    <source>
        <strain>ATCC 27184 / PCC 6803 / Kazusa</strain>
    </source>
</reference>
<proteinExistence type="inferred from homology"/>
<feature type="chain" id="PRO_0000121692" description="tRNA-specific 2-thiouridylase MnmA">
    <location>
        <begin position="1"/>
        <end position="358"/>
    </location>
</feature>
<feature type="region of interest" description="Interaction with tRNA" evidence="1">
    <location>
        <begin position="144"/>
        <end position="146"/>
    </location>
</feature>
<feature type="region of interest" description="Interaction with tRNA" evidence="1">
    <location>
        <begin position="299"/>
        <end position="300"/>
    </location>
</feature>
<feature type="active site" description="Nucleophile" evidence="1">
    <location>
        <position position="95"/>
    </location>
</feature>
<feature type="active site" description="Cysteine persulfide intermediate" evidence="1">
    <location>
        <position position="194"/>
    </location>
</feature>
<feature type="binding site" evidence="1">
    <location>
        <begin position="8"/>
        <end position="15"/>
    </location>
    <ligand>
        <name>ATP</name>
        <dbReference type="ChEBI" id="CHEBI:30616"/>
    </ligand>
</feature>
<feature type="binding site" evidence="1">
    <location>
        <position position="34"/>
    </location>
    <ligand>
        <name>ATP</name>
        <dbReference type="ChEBI" id="CHEBI:30616"/>
    </ligand>
</feature>
<feature type="binding site" evidence="1">
    <location>
        <position position="120"/>
    </location>
    <ligand>
        <name>ATP</name>
        <dbReference type="ChEBI" id="CHEBI:30616"/>
    </ligand>
</feature>
<feature type="site" description="Interaction with tRNA" evidence="1">
    <location>
        <position position="121"/>
    </location>
</feature>
<feature type="site" description="Interaction with tRNA" evidence="1">
    <location>
        <position position="332"/>
    </location>
</feature>
<feature type="disulfide bond" description="Alternate" evidence="1">
    <location>
        <begin position="95"/>
        <end position="194"/>
    </location>
</feature>
<gene>
    <name evidence="1" type="primary">mnmA</name>
    <name type="synonym">trmU</name>
    <name type="ordered locus">sll0844</name>
</gene>
<name>MNMA_SYNY3</name>
<sequence>MTQKVVVGLSGGVDSSVAAALLHRQGYAVVGVTLWLMKGKGQCCSEGLVDAASICEQLGVPHEIVDTRDLFQNHIIDYLVQGYGEGVTPLPCSQCNKAVKFGPMLQYAQQSLGIDKIATGHYARIRFNEASQRYELLRAVDRQKDQSYFLYDLSQEILAATLFPLGEQTKTVTRQLAAEFDLSTAEKKDSQDLCLIEAHGSMRDFLDKYIAPKAGEIVDLSGAVLGHHEGIHHYTIGQRKGLGIAAAEPLYVVKLDPVMNRVIVGDRQSAGSGECYVQRLNWVSIPEPTAPIRCEVQVRYRSAPVTVNAIPWHDQQIKLVFDEPQFGITPGQAAVLYDGDRVLGGGIICPQKSETAGV</sequence>
<evidence type="ECO:0000255" key="1">
    <source>
        <dbReference type="HAMAP-Rule" id="MF_00144"/>
    </source>
</evidence>
<keyword id="KW-0067">ATP-binding</keyword>
<keyword id="KW-0963">Cytoplasm</keyword>
<keyword id="KW-1015">Disulfide bond</keyword>
<keyword id="KW-0547">Nucleotide-binding</keyword>
<keyword id="KW-1185">Reference proteome</keyword>
<keyword id="KW-0694">RNA-binding</keyword>
<keyword id="KW-0808">Transferase</keyword>
<keyword id="KW-0819">tRNA processing</keyword>
<keyword id="KW-0820">tRNA-binding</keyword>
<comment type="function">
    <text evidence="1">Catalyzes the 2-thiolation of uridine at the wobble position (U34) of tRNA, leading to the formation of s(2)U34.</text>
</comment>
<comment type="catalytic activity">
    <reaction evidence="1">
        <text>S-sulfanyl-L-cysteinyl-[protein] + uridine(34) in tRNA + AH2 + ATP = 2-thiouridine(34) in tRNA + L-cysteinyl-[protein] + A + AMP + diphosphate + H(+)</text>
        <dbReference type="Rhea" id="RHEA:47032"/>
        <dbReference type="Rhea" id="RHEA-COMP:10131"/>
        <dbReference type="Rhea" id="RHEA-COMP:11726"/>
        <dbReference type="Rhea" id="RHEA-COMP:11727"/>
        <dbReference type="Rhea" id="RHEA-COMP:11728"/>
        <dbReference type="ChEBI" id="CHEBI:13193"/>
        <dbReference type="ChEBI" id="CHEBI:15378"/>
        <dbReference type="ChEBI" id="CHEBI:17499"/>
        <dbReference type="ChEBI" id="CHEBI:29950"/>
        <dbReference type="ChEBI" id="CHEBI:30616"/>
        <dbReference type="ChEBI" id="CHEBI:33019"/>
        <dbReference type="ChEBI" id="CHEBI:61963"/>
        <dbReference type="ChEBI" id="CHEBI:65315"/>
        <dbReference type="ChEBI" id="CHEBI:87170"/>
        <dbReference type="ChEBI" id="CHEBI:456215"/>
        <dbReference type="EC" id="2.8.1.13"/>
    </reaction>
</comment>
<comment type="subcellular location">
    <subcellularLocation>
        <location evidence="1">Cytoplasm</location>
    </subcellularLocation>
</comment>
<comment type="similarity">
    <text evidence="1">Belongs to the MnmA/TRMU family.</text>
</comment>
<organism>
    <name type="scientific">Synechocystis sp. (strain ATCC 27184 / PCC 6803 / Kazusa)</name>
    <dbReference type="NCBI Taxonomy" id="1111708"/>
    <lineage>
        <taxon>Bacteria</taxon>
        <taxon>Bacillati</taxon>
        <taxon>Cyanobacteriota</taxon>
        <taxon>Cyanophyceae</taxon>
        <taxon>Synechococcales</taxon>
        <taxon>Merismopediaceae</taxon>
        <taxon>Synechocystis</taxon>
    </lineage>
</organism>